<name>HMS1_YEAST</name>
<reference key="1">
    <citation type="journal article" date="1997" name="Nature">
        <title>The nucleotide sequence of Saccharomyces cerevisiae chromosome XV.</title>
        <authorList>
            <person name="Dujon B."/>
            <person name="Albermann K."/>
            <person name="Aldea M."/>
            <person name="Alexandraki D."/>
            <person name="Ansorge W."/>
            <person name="Arino J."/>
            <person name="Benes V."/>
            <person name="Bohn C."/>
            <person name="Bolotin-Fukuhara M."/>
            <person name="Bordonne R."/>
            <person name="Boyer J."/>
            <person name="Camasses A."/>
            <person name="Casamayor A."/>
            <person name="Casas C."/>
            <person name="Cheret G."/>
            <person name="Cziepluch C."/>
            <person name="Daignan-Fornier B."/>
            <person name="Dang V.-D."/>
            <person name="de Haan M."/>
            <person name="Delius H."/>
            <person name="Durand P."/>
            <person name="Fairhead C."/>
            <person name="Feldmann H."/>
            <person name="Gaillon L."/>
            <person name="Galisson F."/>
            <person name="Gamo F.-J."/>
            <person name="Gancedo C."/>
            <person name="Goffeau A."/>
            <person name="Goulding S.E."/>
            <person name="Grivell L.A."/>
            <person name="Habbig B."/>
            <person name="Hand N.J."/>
            <person name="Hani J."/>
            <person name="Hattenhorst U."/>
            <person name="Hebling U."/>
            <person name="Hernando Y."/>
            <person name="Herrero E."/>
            <person name="Heumann K."/>
            <person name="Hiesel R."/>
            <person name="Hilger F."/>
            <person name="Hofmann B."/>
            <person name="Hollenberg C.P."/>
            <person name="Hughes B."/>
            <person name="Jauniaux J.-C."/>
            <person name="Kalogeropoulos A."/>
            <person name="Katsoulou C."/>
            <person name="Kordes E."/>
            <person name="Lafuente M.J."/>
            <person name="Landt O."/>
            <person name="Louis E.J."/>
            <person name="Maarse A.C."/>
            <person name="Madania A."/>
            <person name="Mannhaupt G."/>
            <person name="Marck C."/>
            <person name="Martin R.P."/>
            <person name="Mewes H.-W."/>
            <person name="Michaux G."/>
            <person name="Paces V."/>
            <person name="Parle-McDermott A.G."/>
            <person name="Pearson B.M."/>
            <person name="Perrin A."/>
            <person name="Pettersson B."/>
            <person name="Poch O."/>
            <person name="Pohl T.M."/>
            <person name="Poirey R."/>
            <person name="Portetelle D."/>
            <person name="Pujol A."/>
            <person name="Purnelle B."/>
            <person name="Ramezani Rad M."/>
            <person name="Rechmann S."/>
            <person name="Schwager C."/>
            <person name="Schweizer M."/>
            <person name="Sor F."/>
            <person name="Sterky F."/>
            <person name="Tarassov I.A."/>
            <person name="Teodoru C."/>
            <person name="Tettelin H."/>
            <person name="Thierry A."/>
            <person name="Tobiasch E."/>
            <person name="Tzermia M."/>
            <person name="Uhlen M."/>
            <person name="Unseld M."/>
            <person name="Valens M."/>
            <person name="Vandenbol M."/>
            <person name="Vetter I."/>
            <person name="Vlcek C."/>
            <person name="Voet M."/>
            <person name="Volckaert G."/>
            <person name="Voss H."/>
            <person name="Wambutt R."/>
            <person name="Wedler H."/>
            <person name="Wiemann S."/>
            <person name="Winsor B."/>
            <person name="Wolfe K.H."/>
            <person name="Zollner A."/>
            <person name="Zumstein E."/>
            <person name="Kleine K."/>
        </authorList>
    </citation>
    <scope>NUCLEOTIDE SEQUENCE [LARGE SCALE GENOMIC DNA]</scope>
    <source>
        <strain>ATCC 204508 / S288c</strain>
    </source>
</reference>
<reference key="2">
    <citation type="journal article" date="2014" name="G3 (Bethesda)">
        <title>The reference genome sequence of Saccharomyces cerevisiae: Then and now.</title>
        <authorList>
            <person name="Engel S.R."/>
            <person name="Dietrich F.S."/>
            <person name="Fisk D.G."/>
            <person name="Binkley G."/>
            <person name="Balakrishnan R."/>
            <person name="Costanzo M.C."/>
            <person name="Dwight S.S."/>
            <person name="Hitz B.C."/>
            <person name="Karra K."/>
            <person name="Nash R.S."/>
            <person name="Weng S."/>
            <person name="Wong E.D."/>
            <person name="Lloyd P."/>
            <person name="Skrzypek M.S."/>
            <person name="Miyasato S.R."/>
            <person name="Simison M."/>
            <person name="Cherry J.M."/>
        </authorList>
    </citation>
    <scope>GENOME REANNOTATION</scope>
    <source>
        <strain>ATCC 204508 / S288c</strain>
    </source>
</reference>
<reference key="3">
    <citation type="journal article" date="1998" name="Genetics">
        <title>Regulators of pseudohyphal differentiation in Saccharomyces cerevisiae identified through multicopy suppressor analysis in ammonium permease mutant strains.</title>
        <authorList>
            <person name="Lorenz M.C."/>
            <person name="Heitman J."/>
        </authorList>
    </citation>
    <scope>FUNCTION</scope>
</reference>
<reference key="4">
    <citation type="journal article" date="2004" name="Genetics">
        <title>The identification of Pcl1-interacting proteins that genetically interact with Cla4 may indicate a link between G1 progression and mitotic exit.</title>
        <authorList>
            <person name="Keniry M.E."/>
            <person name="Kemp H.A."/>
            <person name="Rivers D.M."/>
            <person name="Sprague G.F. Jr."/>
        </authorList>
    </citation>
    <scope>FUNCTION</scope>
    <scope>INTERACTION WITH PCL1</scope>
    <scope>PHOSPHORYLATION BY PCL1-PHO85</scope>
</reference>
<protein>
    <recommendedName>
        <fullName>Probable transcription factor HMS1</fullName>
    </recommendedName>
    <alternativeName>
        <fullName>High-copy MEP suppressor protein 1</fullName>
    </alternativeName>
</protein>
<sequence length="434" mass="48871">MPNFQKPFSGSSDGNSVMNDLGNKVAIKVFDCRSAQDGSEEQNVNVTTNQMYLMFQSNNYNVPPPNYNTEDLGSQGPPTHAYYAPFQHPIHLQPPVPPVYKNNTYSATDQYSDSSFPNTSGHTPVIDSNYYNDALASIPTTTTGSTTMTTDNGNTIDSEEYIDNMEVFSSEENENIDNVKQTDLKSEKDSSLLSAASIVKKEQLSGFENFLPLSKTESPLVTADEIKSSLNLENIDNADSMSFKLKTSPIRKHFHVKPKRITRVRTGRVSHNIIEKKYRSNINDKIEQLRRTVPTLRVAYKKCNDLPITSRDLADLDGLEPATKLNKASILTKSIEYICHLERKCLQLSLANQHLSNDTRDSFVHLTEPSQPLSDNSSSEQVQKQTRSCQRQRQRQPRQQQPLHNIQYNIPHQNGLMSGTNNSHDMDFNNAGDF</sequence>
<gene>
    <name type="primary">HMS1</name>
    <name type="ordered locus">YOR032C</name>
    <name type="ORF">OR26.22</name>
</gene>
<proteinExistence type="evidence at protein level"/>
<comment type="function">
    <text evidence="3 4">Involved in exit from mitosis and pseudohyphal differentiation.</text>
</comment>
<comment type="subunit">
    <text evidence="3">Interacts with the G1/S-specific cyclin PCL1.</text>
</comment>
<comment type="subcellular location">
    <subcellularLocation>
        <location evidence="1">Nucleus</location>
    </subcellularLocation>
</comment>
<comment type="PTM">
    <text evidence="3">Phosphorylated by the cyclin-CDK complex PCL1-PHO85.</text>
</comment>
<dbReference type="EMBL" id="X87331">
    <property type="protein sequence ID" value="CAA60748.1"/>
    <property type="molecule type" value="Genomic_DNA"/>
</dbReference>
<dbReference type="EMBL" id="Z74940">
    <property type="protein sequence ID" value="CAA99222.1"/>
    <property type="molecule type" value="Genomic_DNA"/>
</dbReference>
<dbReference type="EMBL" id="BK006948">
    <property type="protein sequence ID" value="DAA10813.1"/>
    <property type="molecule type" value="Genomic_DNA"/>
</dbReference>
<dbReference type="PIR" id="S62168">
    <property type="entry name" value="S62168"/>
</dbReference>
<dbReference type="RefSeq" id="NP_014675.1">
    <property type="nucleotide sequence ID" value="NM_001183451.1"/>
</dbReference>
<dbReference type="PDB" id="8HOV">
    <property type="method" value="X-ray"/>
    <property type="resolution" value="2.77 A"/>
    <property type="chains" value="A/B/C/D/E/F=269-370"/>
</dbReference>
<dbReference type="PDBsum" id="8HOV"/>
<dbReference type="SMR" id="Q12398"/>
<dbReference type="BioGRID" id="34434">
    <property type="interactions" value="79"/>
</dbReference>
<dbReference type="DIP" id="DIP-5658N"/>
<dbReference type="FunCoup" id="Q12398">
    <property type="interactions" value="1244"/>
</dbReference>
<dbReference type="IntAct" id="Q12398">
    <property type="interactions" value="7"/>
</dbReference>
<dbReference type="STRING" id="4932.YOR032C"/>
<dbReference type="iPTMnet" id="Q12398"/>
<dbReference type="PaxDb" id="4932-YOR032C"/>
<dbReference type="PeptideAtlas" id="Q12398"/>
<dbReference type="EnsemblFungi" id="YOR032C_mRNA">
    <property type="protein sequence ID" value="YOR032C"/>
    <property type="gene ID" value="YOR032C"/>
</dbReference>
<dbReference type="GeneID" id="854197"/>
<dbReference type="KEGG" id="sce:YOR032C"/>
<dbReference type="AGR" id="SGD:S000005558"/>
<dbReference type="SGD" id="S000005558">
    <property type="gene designation" value="HMS1"/>
</dbReference>
<dbReference type="VEuPathDB" id="FungiDB:YOR032C"/>
<dbReference type="eggNOG" id="KOG2588">
    <property type="taxonomic scope" value="Eukaryota"/>
</dbReference>
<dbReference type="GeneTree" id="ENSGT00940000168984"/>
<dbReference type="HOGENOM" id="CLU_050098_0_0_1"/>
<dbReference type="InParanoid" id="Q12398"/>
<dbReference type="OMA" id="IDNMEVF"/>
<dbReference type="OrthoDB" id="2133190at2759"/>
<dbReference type="BioCyc" id="YEAST:G3O-33578-MONOMER"/>
<dbReference type="BioGRID-ORCS" id="854197">
    <property type="hits" value="0 hits in 10 CRISPR screens"/>
</dbReference>
<dbReference type="PRO" id="PR:Q12398"/>
<dbReference type="Proteomes" id="UP000002311">
    <property type="component" value="Chromosome XV"/>
</dbReference>
<dbReference type="RNAct" id="Q12398">
    <property type="molecule type" value="protein"/>
</dbReference>
<dbReference type="GO" id="GO:0000785">
    <property type="term" value="C:chromatin"/>
    <property type="evidence" value="ECO:0000318"/>
    <property type="project" value="GO_Central"/>
</dbReference>
<dbReference type="GO" id="GO:0005634">
    <property type="term" value="C:nucleus"/>
    <property type="evidence" value="ECO:0000318"/>
    <property type="project" value="GO_Central"/>
</dbReference>
<dbReference type="GO" id="GO:0001216">
    <property type="term" value="F:DNA-binding transcription activator activity"/>
    <property type="evidence" value="ECO:0000318"/>
    <property type="project" value="GO_Central"/>
</dbReference>
<dbReference type="GO" id="GO:0046983">
    <property type="term" value="F:protein dimerization activity"/>
    <property type="evidence" value="ECO:0007669"/>
    <property type="project" value="InterPro"/>
</dbReference>
<dbReference type="GO" id="GO:0000978">
    <property type="term" value="F:RNA polymerase II cis-regulatory region sequence-specific DNA binding"/>
    <property type="evidence" value="ECO:0000314"/>
    <property type="project" value="SGD"/>
</dbReference>
<dbReference type="GO" id="GO:0045944">
    <property type="term" value="P:positive regulation of transcription by RNA polymerase II"/>
    <property type="evidence" value="ECO:0000318"/>
    <property type="project" value="GO_Central"/>
</dbReference>
<dbReference type="GO" id="GO:0007124">
    <property type="term" value="P:pseudohyphal growth"/>
    <property type="evidence" value="ECO:0000316"/>
    <property type="project" value="SGD"/>
</dbReference>
<dbReference type="CDD" id="cd11399">
    <property type="entry name" value="bHLHzip_scHMS1_like"/>
    <property type="match status" value="1"/>
</dbReference>
<dbReference type="Gene3D" id="4.10.280.10">
    <property type="entry name" value="Helix-loop-helix DNA-binding domain"/>
    <property type="match status" value="1"/>
</dbReference>
<dbReference type="InterPro" id="IPR011598">
    <property type="entry name" value="bHLH_dom"/>
</dbReference>
<dbReference type="InterPro" id="IPR036638">
    <property type="entry name" value="HLH_DNA-bd_sf"/>
</dbReference>
<dbReference type="InterPro" id="IPR052099">
    <property type="entry name" value="Regulatory_TF_Diverse"/>
</dbReference>
<dbReference type="PANTHER" id="PTHR47336">
    <property type="entry name" value="TRANSCRIPTION FACTOR HMS1-RELATED"/>
    <property type="match status" value="1"/>
</dbReference>
<dbReference type="PANTHER" id="PTHR47336:SF2">
    <property type="entry name" value="TRANSCRIPTION FACTOR HMS1-RELATED"/>
    <property type="match status" value="1"/>
</dbReference>
<dbReference type="Pfam" id="PF00010">
    <property type="entry name" value="HLH"/>
    <property type="match status" value="1"/>
</dbReference>
<dbReference type="SMART" id="SM00353">
    <property type="entry name" value="HLH"/>
    <property type="match status" value="1"/>
</dbReference>
<dbReference type="SUPFAM" id="SSF47459">
    <property type="entry name" value="HLH, helix-loop-helix DNA-binding domain"/>
    <property type="match status" value="1"/>
</dbReference>
<dbReference type="PROSITE" id="PS50888">
    <property type="entry name" value="BHLH"/>
    <property type="match status" value="1"/>
</dbReference>
<keyword id="KW-0002">3D-structure</keyword>
<keyword id="KW-0238">DNA-binding</keyword>
<keyword id="KW-0539">Nucleus</keyword>
<keyword id="KW-0597">Phosphoprotein</keyword>
<keyword id="KW-1185">Reference proteome</keyword>
<keyword id="KW-0804">Transcription</keyword>
<keyword id="KW-0805">Transcription regulation</keyword>
<evidence type="ECO:0000255" key="1">
    <source>
        <dbReference type="PROSITE-ProRule" id="PRU00981"/>
    </source>
</evidence>
<evidence type="ECO:0000256" key="2">
    <source>
        <dbReference type="SAM" id="MobiDB-lite"/>
    </source>
</evidence>
<evidence type="ECO:0000269" key="3">
    <source>
    </source>
</evidence>
<evidence type="ECO:0000269" key="4">
    <source>
    </source>
</evidence>
<evidence type="ECO:0007829" key="5">
    <source>
        <dbReference type="PDB" id="8HOV"/>
    </source>
</evidence>
<accession>Q12398</accession>
<accession>D6W297</accession>
<organism>
    <name type="scientific">Saccharomyces cerevisiae (strain ATCC 204508 / S288c)</name>
    <name type="common">Baker's yeast</name>
    <dbReference type="NCBI Taxonomy" id="559292"/>
    <lineage>
        <taxon>Eukaryota</taxon>
        <taxon>Fungi</taxon>
        <taxon>Dikarya</taxon>
        <taxon>Ascomycota</taxon>
        <taxon>Saccharomycotina</taxon>
        <taxon>Saccharomycetes</taxon>
        <taxon>Saccharomycetales</taxon>
        <taxon>Saccharomycetaceae</taxon>
        <taxon>Saccharomyces</taxon>
    </lineage>
</organism>
<feature type="chain" id="PRO_0000224147" description="Probable transcription factor HMS1">
    <location>
        <begin position="1"/>
        <end position="434"/>
    </location>
</feature>
<feature type="domain" description="bHLH" evidence="1">
    <location>
        <begin position="266"/>
        <end position="341"/>
    </location>
</feature>
<feature type="region of interest" description="Disordered" evidence="2">
    <location>
        <begin position="365"/>
        <end position="434"/>
    </location>
</feature>
<feature type="compositionally biased region" description="Polar residues" evidence="2">
    <location>
        <begin position="368"/>
        <end position="382"/>
    </location>
</feature>
<feature type="compositionally biased region" description="Polar residues" evidence="2">
    <location>
        <begin position="402"/>
        <end position="423"/>
    </location>
</feature>
<feature type="helix" evidence="5">
    <location>
        <begin position="271"/>
        <end position="290"/>
    </location>
</feature>
<feature type="helix" evidence="5">
    <location>
        <begin position="294"/>
        <end position="303"/>
    </location>
</feature>
<feature type="helix" evidence="5">
    <location>
        <begin position="310"/>
        <end position="315"/>
    </location>
</feature>
<feature type="turn" evidence="5">
    <location>
        <begin position="316"/>
        <end position="318"/>
    </location>
</feature>
<feature type="helix" evidence="5">
    <location>
        <begin position="327"/>
        <end position="352"/>
    </location>
</feature>